<feature type="transit peptide" description="Mitochondrion">
    <location>
        <begin position="1"/>
        <end position="21"/>
    </location>
</feature>
<feature type="chain" id="PRO_0000007163" description="Aldehyde dehydrogenase 1, mitochondrial">
    <location>
        <begin position="22"/>
        <end position="507"/>
    </location>
</feature>
<feature type="active site" evidence="1">
    <location>
        <position position="289"/>
    </location>
</feature>
<feature type="active site" evidence="1">
    <location>
        <position position="323"/>
    </location>
</feature>
<feature type="binding site" evidence="1">
    <location>
        <begin position="266"/>
        <end position="271"/>
    </location>
    <ligand>
        <name>NAD(+)</name>
        <dbReference type="ChEBI" id="CHEBI:57540"/>
    </ligand>
</feature>
<sequence>MLATRNLVPIIRASIKWRIKLSALHYCMSDAETSEALLEDNSAYINNEKHNLFLEKIFSDYQPFKHDNRTQVSCSQHMRDYRPLLTLSSATRSVLFSLLASDMSIILSISPNTGILLCIGHLLASDIEDVVIVLSRGSPLVDLASTRIFKLAQNGTLRFAIKRTTFQELRFLRKSKDENVMEAATRGIITIRQLYYENKVLPLRFTGNVATHIEENLEFEEQITWRTHVDSSIFPNTRCAYPSGYGPSAKIPCLSHKPNDILAYTGSTLVGRVVSKLAPEQVMKKVTLESGGKSTMAVFIQHDVTWAVENTQFGVFDRQGQCCIAQSGYTVHRSTLSQIVENNLEKDPSYVLHVDTESDIRGPFILKIHFESIPRRINSAKAENSKVLCGGPRENSVYLYPTLSATLTDECRIMKEEVFAPIITILCVKTVDEAIQRGNNSKFGLAAYVTKENVHGIILSTALKTVKLFIICVHLASYQIPFGGNKNSGMGAELGKRALENYTEGNH</sequence>
<organism>
    <name type="scientific">Saccharomyces cerevisiae</name>
    <name type="common">Baker's yeast</name>
    <dbReference type="NCBI Taxonomy" id="4932"/>
    <lineage>
        <taxon>Eukaryota</taxon>
        <taxon>Fungi</taxon>
        <taxon>Dikarya</taxon>
        <taxon>Ascomycota</taxon>
        <taxon>Saccharomycotina</taxon>
        <taxon>Saccharomycetes</taxon>
        <taxon>Saccharomycetales</taxon>
        <taxon>Saccharomycetaceae</taxon>
        <taxon>Saccharomyces</taxon>
    </lineage>
</organism>
<protein>
    <recommendedName>
        <fullName>Aldehyde dehydrogenase 1, mitochondrial</fullName>
        <ecNumber>1.2.1.3</ecNumber>
    </recommendedName>
</protein>
<name>ALDHX_YEASX</name>
<evidence type="ECO:0000250" key="1"/>
<evidence type="ECO:0000305" key="2"/>
<keyword id="KW-0496">Mitochondrion</keyword>
<keyword id="KW-0520">NAD</keyword>
<keyword id="KW-0560">Oxidoreductase</keyword>
<keyword id="KW-0809">Transit peptide</keyword>
<accession>P22281</accession>
<reference key="1">
    <citation type="journal article" date="1991" name="J. Bacteriol.">
        <title>Molecular cloning of the mitochondrial aldehyde dehydrogenase gene of Saccharomyces cerevisiae by genetic complementation.</title>
        <authorList>
            <person name="Saigal D."/>
            <person name="Cunningham S.J."/>
            <person name="Farres J."/>
            <person name="Weiner H."/>
        </authorList>
    </citation>
    <scope>NUCLEOTIDE SEQUENCE [GENOMIC DNA]</scope>
    <source>
        <strain>XK25-1B</strain>
    </source>
</reference>
<comment type="catalytic activity">
    <reaction>
        <text>an aldehyde + NAD(+) + H2O = a carboxylate + NADH + 2 H(+)</text>
        <dbReference type="Rhea" id="RHEA:16185"/>
        <dbReference type="ChEBI" id="CHEBI:15377"/>
        <dbReference type="ChEBI" id="CHEBI:15378"/>
        <dbReference type="ChEBI" id="CHEBI:17478"/>
        <dbReference type="ChEBI" id="CHEBI:29067"/>
        <dbReference type="ChEBI" id="CHEBI:57540"/>
        <dbReference type="ChEBI" id="CHEBI:57945"/>
        <dbReference type="EC" id="1.2.1.3"/>
    </reaction>
</comment>
<comment type="pathway">
    <text>Alcohol metabolism; ethanol degradation; acetate from ethanol: step 2/2.</text>
</comment>
<comment type="subunit">
    <text>Homotetramer.</text>
</comment>
<comment type="subcellular location">
    <subcellularLocation>
        <location>Mitochondrion matrix</location>
    </subcellularLocation>
</comment>
<comment type="similarity">
    <text evidence="2">Belongs to the aldehyde dehydrogenase family.</text>
</comment>
<comment type="caution">
    <text evidence="2">Is not present in yeast genome.</text>
</comment>
<proteinExistence type="inferred from homology"/>
<gene>
    <name type="primary">ALD1</name>
    <name type="synonym">ALDH</name>
    <name type="synonym">ALDH1</name>
</gene>
<dbReference type="EC" id="1.2.1.3"/>
<dbReference type="EMBL" id="M57887">
    <property type="protein sequence ID" value="AAA34419.2"/>
    <property type="molecule type" value="Genomic_DNA"/>
</dbReference>
<dbReference type="PIR" id="A39410">
    <property type="entry name" value="A39410"/>
</dbReference>
<dbReference type="SMR" id="P22281"/>
<dbReference type="BindingDB" id="P22281"/>
<dbReference type="ChEMBL" id="CHEMBL5923"/>
<dbReference type="SGD" id="S000029651">
    <property type="gene designation" value="ALD1"/>
</dbReference>
<dbReference type="VEuPathDB" id="FungiDB:YER073W"/>
<dbReference type="VEuPathDB" id="FungiDB:YKR096W"/>
<dbReference type="UniPathway" id="UPA00780">
    <property type="reaction ID" value="UER00768"/>
</dbReference>
<dbReference type="GO" id="GO:0005759">
    <property type="term" value="C:mitochondrial matrix"/>
    <property type="evidence" value="ECO:0007669"/>
    <property type="project" value="UniProtKB-SubCell"/>
</dbReference>
<dbReference type="GO" id="GO:0004029">
    <property type="term" value="F:aldehyde dehydrogenase (NAD+) activity"/>
    <property type="evidence" value="ECO:0007669"/>
    <property type="project" value="UniProtKB-EC"/>
</dbReference>
<dbReference type="GO" id="GO:0006068">
    <property type="term" value="P:ethanol catabolic process"/>
    <property type="evidence" value="ECO:0007669"/>
    <property type="project" value="UniProtKB-UniPathway"/>
</dbReference>
<dbReference type="Gene3D" id="3.40.605.10">
    <property type="entry name" value="Aldehyde Dehydrogenase, Chain A, domain 1"/>
    <property type="match status" value="1"/>
</dbReference>
<dbReference type="Gene3D" id="3.40.309.10">
    <property type="entry name" value="Aldehyde Dehydrogenase, Chain A, domain 2"/>
    <property type="match status" value="1"/>
</dbReference>
<dbReference type="InterPro" id="IPR016161">
    <property type="entry name" value="Ald_DH/histidinol_DH"/>
</dbReference>
<dbReference type="InterPro" id="IPR016163">
    <property type="entry name" value="Ald_DH_C"/>
</dbReference>
<dbReference type="InterPro" id="IPR016160">
    <property type="entry name" value="Ald_DH_CS_CYS"/>
</dbReference>
<dbReference type="InterPro" id="IPR029510">
    <property type="entry name" value="Ald_DH_CS_GLU"/>
</dbReference>
<dbReference type="InterPro" id="IPR016162">
    <property type="entry name" value="Ald_DH_N"/>
</dbReference>
<dbReference type="InterPro" id="IPR015590">
    <property type="entry name" value="Aldehyde_DH_dom"/>
</dbReference>
<dbReference type="PANTHER" id="PTHR11699">
    <property type="entry name" value="ALDEHYDE DEHYDROGENASE-RELATED"/>
    <property type="match status" value="1"/>
</dbReference>
<dbReference type="Pfam" id="PF00171">
    <property type="entry name" value="Aldedh"/>
    <property type="match status" value="1"/>
</dbReference>
<dbReference type="SUPFAM" id="SSF53720">
    <property type="entry name" value="ALDH-like"/>
    <property type="match status" value="1"/>
</dbReference>
<dbReference type="PROSITE" id="PS00070">
    <property type="entry name" value="ALDEHYDE_DEHYDR_CYS"/>
    <property type="match status" value="1"/>
</dbReference>
<dbReference type="PROSITE" id="PS00687">
    <property type="entry name" value="ALDEHYDE_DEHYDR_GLU"/>
    <property type="match status" value="1"/>
</dbReference>